<accession>A7M8Y9</accession>
<name>ATPA_CUSGR</name>
<proteinExistence type="inferred from homology"/>
<gene>
    <name evidence="2" type="primary">atpA</name>
</gene>
<reference key="1">
    <citation type="journal article" date="2007" name="BMC Plant Biol.">
        <title>Complete DNA sequences of the plastid genomes of two parasitic flowering plant species, Cuscuta reflexa and Cuscuta gronovii.</title>
        <authorList>
            <person name="Funk H.T."/>
            <person name="Berg S."/>
            <person name="Krupinska K."/>
            <person name="Maier U.-G."/>
            <person name="Krause K."/>
        </authorList>
    </citation>
    <scope>NUCLEOTIDE SEQUENCE [LARGE SCALE GENOMIC DNA]</scope>
</reference>
<protein>
    <recommendedName>
        <fullName evidence="2">ATP synthase subunit alpha, plastid</fullName>
        <ecNumber evidence="2">7.1.2.2</ecNumber>
    </recommendedName>
    <alternativeName>
        <fullName evidence="2">ATP synthase F1 sector subunit alpha</fullName>
    </alternativeName>
    <alternativeName>
        <fullName evidence="2">F-ATPase subunit alpha</fullName>
    </alternativeName>
</protein>
<keyword id="KW-0066">ATP synthesis</keyword>
<keyword id="KW-0067">ATP-binding</keyword>
<keyword id="KW-0139">CF(1)</keyword>
<keyword id="KW-0375">Hydrogen ion transport</keyword>
<keyword id="KW-0406">Ion transport</keyword>
<keyword id="KW-0472">Membrane</keyword>
<keyword id="KW-0547">Nucleotide-binding</keyword>
<keyword id="KW-0934">Plastid</keyword>
<keyword id="KW-1278">Translocase</keyword>
<keyword id="KW-0813">Transport</keyword>
<organism>
    <name type="scientific">Cuscuta gronovii</name>
    <name type="common">Common dodder</name>
    <name type="synonym">Epithymum gronovii</name>
    <dbReference type="NCBI Taxonomy" id="35886"/>
    <lineage>
        <taxon>Eukaryota</taxon>
        <taxon>Viridiplantae</taxon>
        <taxon>Streptophyta</taxon>
        <taxon>Embryophyta</taxon>
        <taxon>Tracheophyta</taxon>
        <taxon>Spermatophyta</taxon>
        <taxon>Magnoliopsida</taxon>
        <taxon>eudicotyledons</taxon>
        <taxon>Gunneridae</taxon>
        <taxon>Pentapetalae</taxon>
        <taxon>asterids</taxon>
        <taxon>lamiids</taxon>
        <taxon>Solanales</taxon>
        <taxon>Convolvulaceae</taxon>
        <taxon>Cuscuteae</taxon>
        <taxon>Cuscuta</taxon>
        <taxon>Cuscuta subgen. Grammica</taxon>
        <taxon>Cuscuta sect. Oxycarpae</taxon>
    </lineage>
</organism>
<comment type="function">
    <text evidence="2">Produces ATP from ADP in the presence of a proton gradient across the membrane. The alpha chain is a regulatory subunit.</text>
</comment>
<comment type="catalytic activity">
    <reaction evidence="2">
        <text>ATP + H2O + 4 H(+)(in) = ADP + phosphate + 5 H(+)(out)</text>
        <dbReference type="Rhea" id="RHEA:57720"/>
        <dbReference type="ChEBI" id="CHEBI:15377"/>
        <dbReference type="ChEBI" id="CHEBI:15378"/>
        <dbReference type="ChEBI" id="CHEBI:30616"/>
        <dbReference type="ChEBI" id="CHEBI:43474"/>
        <dbReference type="ChEBI" id="CHEBI:456216"/>
        <dbReference type="EC" id="7.1.2.2"/>
    </reaction>
</comment>
<comment type="subunit">
    <text evidence="2">F-type ATPases have 2 components, CF(1) - the catalytic core - and CF(0) - the membrane proton channel. CF(1) has five subunits: alpha(3), beta(3), gamma(1), delta(1), epsilon(1). CF(0) has four main subunits: a, b, b' and c.</text>
</comment>
<comment type="subcellular location">
    <subcellularLocation>
        <location evidence="1">Plastid membrane</location>
        <topology evidence="2">Peripheral membrane protein</topology>
    </subcellularLocation>
</comment>
<comment type="similarity">
    <text evidence="2">Belongs to the ATPase alpha/beta chains family.</text>
</comment>
<comment type="caution">
    <text evidence="3">Young tissue from this organism is photosynthetic and contains some thylakoids, although the photosynthetic activity does not exceed the light compensation point.</text>
</comment>
<evidence type="ECO:0000250" key="1"/>
<evidence type="ECO:0000255" key="2">
    <source>
        <dbReference type="HAMAP-Rule" id="MF_01346"/>
    </source>
</evidence>
<evidence type="ECO:0000305" key="3"/>
<geneLocation type="plastid"/>
<dbReference type="EC" id="7.1.2.2" evidence="2"/>
<dbReference type="EMBL" id="AM711639">
    <property type="protein sequence ID" value="CAM98317.1"/>
    <property type="molecule type" value="Genomic_DNA"/>
</dbReference>
<dbReference type="RefSeq" id="YP_001430031.1">
    <property type="nucleotide sequence ID" value="NC_009765.1"/>
</dbReference>
<dbReference type="SMR" id="A7M8Y9"/>
<dbReference type="GeneID" id="5536733"/>
<dbReference type="GO" id="GO:0042170">
    <property type="term" value="C:plastid membrane"/>
    <property type="evidence" value="ECO:0007669"/>
    <property type="project" value="UniProtKB-SubCell"/>
</dbReference>
<dbReference type="GO" id="GO:0045259">
    <property type="term" value="C:proton-transporting ATP synthase complex"/>
    <property type="evidence" value="ECO:0007669"/>
    <property type="project" value="UniProtKB-KW"/>
</dbReference>
<dbReference type="GO" id="GO:0043531">
    <property type="term" value="F:ADP binding"/>
    <property type="evidence" value="ECO:0007669"/>
    <property type="project" value="TreeGrafter"/>
</dbReference>
<dbReference type="GO" id="GO:0005524">
    <property type="term" value="F:ATP binding"/>
    <property type="evidence" value="ECO:0007669"/>
    <property type="project" value="UniProtKB-KW"/>
</dbReference>
<dbReference type="GO" id="GO:0046933">
    <property type="term" value="F:proton-transporting ATP synthase activity, rotational mechanism"/>
    <property type="evidence" value="ECO:0007669"/>
    <property type="project" value="InterPro"/>
</dbReference>
<dbReference type="CDD" id="cd18113">
    <property type="entry name" value="ATP-synt_F1_alpha_C"/>
    <property type="match status" value="1"/>
</dbReference>
<dbReference type="CDD" id="cd18116">
    <property type="entry name" value="ATP-synt_F1_alpha_N"/>
    <property type="match status" value="1"/>
</dbReference>
<dbReference type="CDD" id="cd01132">
    <property type="entry name" value="F1-ATPase_alpha_CD"/>
    <property type="match status" value="1"/>
</dbReference>
<dbReference type="FunFam" id="1.20.150.20:FF:000001">
    <property type="entry name" value="ATP synthase subunit alpha"/>
    <property type="match status" value="1"/>
</dbReference>
<dbReference type="FunFam" id="2.40.30.20:FF:000001">
    <property type="entry name" value="ATP synthase subunit alpha"/>
    <property type="match status" value="1"/>
</dbReference>
<dbReference type="FunFam" id="3.40.50.300:FF:000002">
    <property type="entry name" value="ATP synthase subunit alpha"/>
    <property type="match status" value="1"/>
</dbReference>
<dbReference type="Gene3D" id="2.40.30.20">
    <property type="match status" value="1"/>
</dbReference>
<dbReference type="Gene3D" id="1.20.150.20">
    <property type="entry name" value="ATP synthase alpha/beta chain, C-terminal domain"/>
    <property type="match status" value="1"/>
</dbReference>
<dbReference type="Gene3D" id="3.40.50.300">
    <property type="entry name" value="P-loop containing nucleotide triphosphate hydrolases"/>
    <property type="match status" value="1"/>
</dbReference>
<dbReference type="HAMAP" id="MF_01346">
    <property type="entry name" value="ATP_synth_alpha_bact"/>
    <property type="match status" value="1"/>
</dbReference>
<dbReference type="InterPro" id="IPR023366">
    <property type="entry name" value="ATP_synth_asu-like_sf"/>
</dbReference>
<dbReference type="InterPro" id="IPR000793">
    <property type="entry name" value="ATP_synth_asu_C"/>
</dbReference>
<dbReference type="InterPro" id="IPR038376">
    <property type="entry name" value="ATP_synth_asu_C_sf"/>
</dbReference>
<dbReference type="InterPro" id="IPR033732">
    <property type="entry name" value="ATP_synth_F1_a_nt-bd_dom"/>
</dbReference>
<dbReference type="InterPro" id="IPR005294">
    <property type="entry name" value="ATP_synth_F1_asu"/>
</dbReference>
<dbReference type="InterPro" id="IPR020003">
    <property type="entry name" value="ATPase_a/bsu_AS"/>
</dbReference>
<dbReference type="InterPro" id="IPR004100">
    <property type="entry name" value="ATPase_F1/V1/A1_a/bsu_N"/>
</dbReference>
<dbReference type="InterPro" id="IPR036121">
    <property type="entry name" value="ATPase_F1/V1/A1_a/bsu_N_sf"/>
</dbReference>
<dbReference type="InterPro" id="IPR000194">
    <property type="entry name" value="ATPase_F1/V1/A1_a/bsu_nucl-bd"/>
</dbReference>
<dbReference type="InterPro" id="IPR027417">
    <property type="entry name" value="P-loop_NTPase"/>
</dbReference>
<dbReference type="NCBIfam" id="TIGR00962">
    <property type="entry name" value="atpA"/>
    <property type="match status" value="1"/>
</dbReference>
<dbReference type="NCBIfam" id="NF009884">
    <property type="entry name" value="PRK13343.1"/>
    <property type="match status" value="1"/>
</dbReference>
<dbReference type="PANTHER" id="PTHR48082">
    <property type="entry name" value="ATP SYNTHASE SUBUNIT ALPHA, MITOCHONDRIAL"/>
    <property type="match status" value="1"/>
</dbReference>
<dbReference type="PANTHER" id="PTHR48082:SF2">
    <property type="entry name" value="ATP SYNTHASE SUBUNIT ALPHA, MITOCHONDRIAL"/>
    <property type="match status" value="1"/>
</dbReference>
<dbReference type="Pfam" id="PF00006">
    <property type="entry name" value="ATP-synt_ab"/>
    <property type="match status" value="1"/>
</dbReference>
<dbReference type="Pfam" id="PF00306">
    <property type="entry name" value="ATP-synt_ab_C"/>
    <property type="match status" value="1"/>
</dbReference>
<dbReference type="Pfam" id="PF02874">
    <property type="entry name" value="ATP-synt_ab_N"/>
    <property type="match status" value="1"/>
</dbReference>
<dbReference type="PIRSF" id="PIRSF039088">
    <property type="entry name" value="F_ATPase_subunit_alpha"/>
    <property type="match status" value="1"/>
</dbReference>
<dbReference type="SUPFAM" id="SSF47917">
    <property type="entry name" value="C-terminal domain of alpha and beta subunits of F1 ATP synthase"/>
    <property type="match status" value="1"/>
</dbReference>
<dbReference type="SUPFAM" id="SSF50615">
    <property type="entry name" value="N-terminal domain of alpha and beta subunits of F1 ATP synthase"/>
    <property type="match status" value="1"/>
</dbReference>
<dbReference type="SUPFAM" id="SSF52540">
    <property type="entry name" value="P-loop containing nucleoside triphosphate hydrolases"/>
    <property type="match status" value="1"/>
</dbReference>
<dbReference type="PROSITE" id="PS00152">
    <property type="entry name" value="ATPASE_ALPHA_BETA"/>
    <property type="match status" value="1"/>
</dbReference>
<sequence>MVTIRADEISNIIRERIQHYTKKINILNTGTVLQVGDGIVRIYGLDEVMAGELIEFEEGTKGIALNLESKNVGVVLMGDGLRIKEGGSVKATGRIAQVPVGDAYLGRVINALATPIDGRGEILSSEFRLIDSPAPGILSRRSIYEPLQTGLIAIDSMIPIGRGQRELIIGDRQTGKTAVATDTILNQQSKNVICVYVAIGQKASSVAQVVTTLQEKGALQYTIVVAEMADSAATLQYLAPYTGAALAEYFMYKERHTLIIYDDLSKQAQAYRQMSLLLRRPPGREAYPGDVFYLHSRLLERAAKLSSKLGEGSMTALPIVETQSGDVSAYIPTNVISITDGQIFLSADLFNAGLRPAINVGISVSRVGSAAQIKAMKQVASKLKLELAQFAELEAFAQFASDLDQASQNLLARGQRLRELLKQSQSAPLTTAEQIMSIYAGINGYLDSLELGQIGKFLRELSDYLKVNKPRFQEIINSTKTFTEEAEAILKDTIPSEKDRFLLEEKI</sequence>
<feature type="chain" id="PRO_0000339081" description="ATP synthase subunit alpha, plastid">
    <location>
        <begin position="1"/>
        <end position="507"/>
    </location>
</feature>
<feature type="binding site" evidence="2">
    <location>
        <begin position="170"/>
        <end position="177"/>
    </location>
    <ligand>
        <name>ATP</name>
        <dbReference type="ChEBI" id="CHEBI:30616"/>
    </ligand>
</feature>
<feature type="site" description="Required for activity" evidence="2">
    <location>
        <position position="363"/>
    </location>
</feature>